<proteinExistence type="inferred from homology"/>
<dbReference type="EMBL" id="GU293106">
    <property type="protein sequence ID" value="ADB56922.1"/>
    <property type="molecule type" value="Genomic_DNA"/>
</dbReference>
<dbReference type="ArachnoServer" id="AS001880">
    <property type="toxin name" value="U3-theraphotoxin-Hhn1d"/>
</dbReference>
<dbReference type="GO" id="GO:0005576">
    <property type="term" value="C:extracellular region"/>
    <property type="evidence" value="ECO:0007669"/>
    <property type="project" value="UniProtKB-SubCell"/>
</dbReference>
<dbReference type="GO" id="GO:0008200">
    <property type="term" value="F:ion channel inhibitor activity"/>
    <property type="evidence" value="ECO:0007669"/>
    <property type="project" value="InterPro"/>
</dbReference>
<dbReference type="GO" id="GO:0090729">
    <property type="term" value="F:toxin activity"/>
    <property type="evidence" value="ECO:0007669"/>
    <property type="project" value="UniProtKB-KW"/>
</dbReference>
<dbReference type="InterPro" id="IPR011696">
    <property type="entry name" value="Huwentoxin-1"/>
</dbReference>
<dbReference type="InterPro" id="IPR013140">
    <property type="entry name" value="Huwentoxin_CS1"/>
</dbReference>
<dbReference type="Pfam" id="PF07740">
    <property type="entry name" value="Toxin_12"/>
    <property type="match status" value="1"/>
</dbReference>
<dbReference type="SUPFAM" id="SSF57059">
    <property type="entry name" value="omega toxin-like"/>
    <property type="match status" value="1"/>
</dbReference>
<dbReference type="PROSITE" id="PS60021">
    <property type="entry name" value="HWTX_1"/>
    <property type="match status" value="1"/>
</dbReference>
<comment type="function">
    <text evidence="1">Ion channel inhibitor.</text>
</comment>
<comment type="subcellular location">
    <subcellularLocation>
        <location evidence="1">Secreted</location>
    </subcellularLocation>
</comment>
<comment type="tissue specificity">
    <text>Expressed by the venom gland.</text>
</comment>
<comment type="domain">
    <text evidence="1">The presence of a 'disulfide through disulfide knot' structurally defines this protein as a knottin.</text>
</comment>
<comment type="similarity">
    <text evidence="4">Belongs to the neurotoxin 10 (Hwtx-1) family. 51 (Hntx-8) subfamily. Hntx-8 sub-subfamily.</text>
</comment>
<feature type="signal peptide" evidence="3">
    <location>
        <begin position="1"/>
        <end position="24"/>
    </location>
</feature>
<feature type="propeptide" id="PRO_0000400637" evidence="1">
    <location>
        <begin position="25"/>
        <end position="52"/>
    </location>
</feature>
<feature type="peptide" id="PRO_0000400638" description="U3-theraphotoxin-Hhn1d">
    <location>
        <begin position="53"/>
        <end position="87"/>
    </location>
</feature>
<feature type="disulfide bond" evidence="2">
    <location>
        <begin position="54"/>
        <end position="67"/>
    </location>
</feature>
<feature type="disulfide bond" evidence="2">
    <location>
        <begin position="61"/>
        <end position="72"/>
    </location>
</feature>
<feature type="disulfide bond" evidence="2">
    <location>
        <begin position="66"/>
        <end position="79"/>
    </location>
</feature>
<evidence type="ECO:0000250" key="1"/>
<evidence type="ECO:0000250" key="2">
    <source>
        <dbReference type="UniProtKB" id="B3FIS6"/>
    </source>
</evidence>
<evidence type="ECO:0000255" key="3"/>
<evidence type="ECO:0000305" key="4"/>
<keyword id="KW-1015">Disulfide bond</keyword>
<keyword id="KW-0872">Ion channel impairing toxin</keyword>
<keyword id="KW-0960">Knottin</keyword>
<keyword id="KW-0964">Secreted</keyword>
<keyword id="KW-0732">Signal</keyword>
<keyword id="KW-0800">Toxin</keyword>
<sequence length="87" mass="10165">MVNMKASMFLTFAGLVLLFVVCYASESEEKEFPKEMLSSIFAVDNDFKQEERDCAGYMRECKEKLCCSGYVCPSRWKWCVLPAPWRR</sequence>
<accession>D2Y2M9</accession>
<name>H8L01_CYRHA</name>
<protein>
    <recommendedName>
        <fullName>U3-theraphotoxin-Hhn1d</fullName>
        <shortName>U3-TRTX-Hhn1d</shortName>
    </recommendedName>
    <alternativeName>
        <fullName>Hainantoxin-VIII-12</fullName>
        <shortName>HNTX-VIII-12</shortName>
    </alternativeName>
</protein>
<organism>
    <name type="scientific">Cyriopagopus hainanus</name>
    <name type="common">Chinese bird spider</name>
    <name type="synonym">Haplopelma hainanum</name>
    <dbReference type="NCBI Taxonomy" id="209901"/>
    <lineage>
        <taxon>Eukaryota</taxon>
        <taxon>Metazoa</taxon>
        <taxon>Ecdysozoa</taxon>
        <taxon>Arthropoda</taxon>
        <taxon>Chelicerata</taxon>
        <taxon>Arachnida</taxon>
        <taxon>Araneae</taxon>
        <taxon>Mygalomorphae</taxon>
        <taxon>Theraphosidae</taxon>
        <taxon>Haplopelma</taxon>
    </lineage>
</organism>
<reference key="1">
    <citation type="journal article" date="2010" name="J. Proteome Res.">
        <title>Molecular diversification of peptide toxins from the tarantula Haplopelma hainanum (Ornithoctonus hainana) venom based on transcriptomic, peptidomic, and genomic analyses.</title>
        <authorList>
            <person name="Tang X."/>
            <person name="Zhang Y."/>
            <person name="Hu W."/>
            <person name="Xu D."/>
            <person name="Tao H."/>
            <person name="Yang X."/>
            <person name="Li Y."/>
            <person name="Jiang L."/>
            <person name="Liang S."/>
        </authorList>
    </citation>
    <scope>NUCLEOTIDE SEQUENCE [LARGE SCALE GENOMIC DNA]</scope>
    <source>
        <tissue>Venom gland</tissue>
    </source>
</reference>